<gene>
    <name evidence="5" type="primary">CCOAOMT3</name>
</gene>
<proteinExistence type="evidence at protein level"/>
<feature type="chain" id="PRO_0000451496" description="Caffeoyl-CoA O-methyltransferase 3">
    <location>
        <begin position="1"/>
        <end position="248"/>
    </location>
</feature>
<feature type="binding site" evidence="2">
    <location>
        <position position="22"/>
    </location>
    <ligand>
        <name>substrate</name>
    </ligand>
</feature>
<feature type="binding site" evidence="3">
    <location>
        <position position="64"/>
    </location>
    <ligand>
        <name>S-adenosyl-L-methionine</name>
        <dbReference type="ChEBI" id="CHEBI:59789"/>
    </ligand>
</feature>
<feature type="binding site" evidence="3">
    <location>
        <position position="86"/>
    </location>
    <ligand>
        <name>S-adenosyl-L-methionine</name>
        <dbReference type="ChEBI" id="CHEBI:59789"/>
    </ligand>
</feature>
<feature type="binding site" evidence="3">
    <location>
        <begin position="88"/>
        <end position="89"/>
    </location>
    <ligand>
        <name>S-adenosyl-L-methionine</name>
        <dbReference type="ChEBI" id="CHEBI:59789"/>
    </ligand>
</feature>
<feature type="binding site" evidence="3">
    <location>
        <position position="94"/>
    </location>
    <ligand>
        <name>S-adenosyl-L-methionine</name>
        <dbReference type="ChEBI" id="CHEBI:59789"/>
    </ligand>
</feature>
<feature type="binding site" evidence="3">
    <location>
        <position position="112"/>
    </location>
    <ligand>
        <name>S-adenosyl-L-methionine</name>
        <dbReference type="ChEBI" id="CHEBI:59789"/>
    </ligand>
</feature>
<feature type="binding site" evidence="3">
    <location>
        <position position="141"/>
    </location>
    <ligand>
        <name>S-adenosyl-L-methionine</name>
        <dbReference type="ChEBI" id="CHEBI:59789"/>
    </ligand>
</feature>
<feature type="binding site" evidence="3">
    <location>
        <position position="164"/>
    </location>
    <ligand>
        <name>a divalent metal cation</name>
        <dbReference type="ChEBI" id="CHEBI:60240"/>
    </ligand>
</feature>
<feature type="binding site" evidence="2">
    <location>
        <position position="164"/>
    </location>
    <ligand>
        <name>substrate</name>
    </ligand>
</feature>
<feature type="binding site" evidence="3">
    <location>
        <position position="166"/>
    </location>
    <ligand>
        <name>S-adenosyl-L-methionine</name>
        <dbReference type="ChEBI" id="CHEBI:59789"/>
    </ligand>
</feature>
<feature type="binding site" evidence="3">
    <location>
        <position position="190"/>
    </location>
    <ligand>
        <name>a divalent metal cation</name>
        <dbReference type="ChEBI" id="CHEBI:60240"/>
    </ligand>
</feature>
<feature type="binding site" evidence="3">
    <location>
        <position position="191"/>
    </location>
    <ligand>
        <name>a divalent metal cation</name>
        <dbReference type="ChEBI" id="CHEBI:60240"/>
    </ligand>
</feature>
<feature type="binding site" evidence="2">
    <location>
        <position position="195"/>
    </location>
    <ligand>
        <name>substrate</name>
    </ligand>
</feature>
<protein>
    <recommendedName>
        <fullName evidence="5">Caffeoyl-CoA O-methyltransferase 3</fullName>
        <shortName evidence="5">PhCCoAOMT3</shortName>
        <ecNumber evidence="3 4">2.1.1.104</ecNumber>
    </recommendedName>
    <alternativeName>
        <fullName evidence="6">5-hydroxyferuloyl-CoA O-methyltransferase 1</fullName>
        <ecNumber evidence="4">2.1.1.-</ecNumber>
    </alternativeName>
</protein>
<organism>
    <name type="scientific">Petunia hybrida</name>
    <name type="common">Petunia</name>
    <dbReference type="NCBI Taxonomy" id="4102"/>
    <lineage>
        <taxon>Eukaryota</taxon>
        <taxon>Viridiplantae</taxon>
        <taxon>Streptophyta</taxon>
        <taxon>Embryophyta</taxon>
        <taxon>Tracheophyta</taxon>
        <taxon>Spermatophyta</taxon>
        <taxon>Magnoliopsida</taxon>
        <taxon>eudicotyledons</taxon>
        <taxon>Gunneridae</taxon>
        <taxon>Pentapetalae</taxon>
        <taxon>asterids</taxon>
        <taxon>lamiids</taxon>
        <taxon>Solanales</taxon>
        <taxon>Solanaceae</taxon>
        <taxon>Petunioideae</taxon>
        <taxon>Petunia</taxon>
    </lineage>
</organism>
<sequence length="248" mass="27856">MAENGASQETTQVAKHQEVGHKSLLQSDALYQYILETSVYPREPEPMKELREITAKHPWNLMTTSADEGQFLNMLLKLINAKNTMEIGVYTGYSLLATALALPDDGKILAMDINRENYEIGLPVIQKAGVAHKIDFREGPALPVLDLMVEDKSNHGTYDFIFVDADKDNYINYHKRIIELVKVGGVIGYDNTLWNGSVVAPPDAPLRKYVRYYRDFVLELNKALAADPRIEICMLPVGDGITLCRRVS</sequence>
<dbReference type="EC" id="2.1.1.104" evidence="3 4"/>
<dbReference type="EC" id="2.1.1.-" evidence="4"/>
<dbReference type="EMBL" id="KT223508">
    <property type="protein sequence ID" value="ALP75648.1"/>
    <property type="molecule type" value="mRNA"/>
</dbReference>
<dbReference type="SMR" id="A0A0S2UWA5"/>
<dbReference type="UniPathway" id="UPA00711"/>
<dbReference type="GO" id="GO:0005829">
    <property type="term" value="C:cytosol"/>
    <property type="evidence" value="ECO:0000250"/>
    <property type="project" value="UniProtKB"/>
</dbReference>
<dbReference type="GO" id="GO:0042409">
    <property type="term" value="F:caffeoyl-CoA O-methyltransferase activity"/>
    <property type="evidence" value="ECO:0000250"/>
    <property type="project" value="UniProtKB"/>
</dbReference>
<dbReference type="GO" id="GO:0046872">
    <property type="term" value="F:metal ion binding"/>
    <property type="evidence" value="ECO:0007669"/>
    <property type="project" value="UniProtKB-KW"/>
</dbReference>
<dbReference type="GO" id="GO:0007623">
    <property type="term" value="P:circadian rhythm"/>
    <property type="evidence" value="ECO:0000270"/>
    <property type="project" value="UniProtKB"/>
</dbReference>
<dbReference type="GO" id="GO:0009809">
    <property type="term" value="P:lignin biosynthetic process"/>
    <property type="evidence" value="ECO:0007669"/>
    <property type="project" value="UniProtKB-KW"/>
</dbReference>
<dbReference type="GO" id="GO:0032259">
    <property type="term" value="P:methylation"/>
    <property type="evidence" value="ECO:0007669"/>
    <property type="project" value="UniProtKB-KW"/>
</dbReference>
<dbReference type="GO" id="GO:0009698">
    <property type="term" value="P:phenylpropanoid metabolic process"/>
    <property type="evidence" value="ECO:0000250"/>
    <property type="project" value="UniProtKB"/>
</dbReference>
<dbReference type="CDD" id="cd02440">
    <property type="entry name" value="AdoMet_MTases"/>
    <property type="match status" value="1"/>
</dbReference>
<dbReference type="FunFam" id="3.40.50.150:FF:000147">
    <property type="entry name" value="Caffeoyl-CoA O-methyltransferase 1"/>
    <property type="match status" value="1"/>
</dbReference>
<dbReference type="Gene3D" id="3.40.50.150">
    <property type="entry name" value="Vaccinia Virus protein VP39"/>
    <property type="match status" value="1"/>
</dbReference>
<dbReference type="InterPro" id="IPR050362">
    <property type="entry name" value="Cation-dep_OMT"/>
</dbReference>
<dbReference type="InterPro" id="IPR029063">
    <property type="entry name" value="SAM-dependent_MTases_sf"/>
</dbReference>
<dbReference type="InterPro" id="IPR002935">
    <property type="entry name" value="SAM_O-MeTrfase"/>
</dbReference>
<dbReference type="PANTHER" id="PTHR10509:SF84">
    <property type="entry name" value="CAFFEOYL-COA O-METHYLTRANSFERASE 1"/>
    <property type="match status" value="1"/>
</dbReference>
<dbReference type="PANTHER" id="PTHR10509">
    <property type="entry name" value="O-METHYLTRANSFERASE-RELATED"/>
    <property type="match status" value="1"/>
</dbReference>
<dbReference type="Pfam" id="PF01596">
    <property type="entry name" value="Methyltransf_3"/>
    <property type="match status" value="1"/>
</dbReference>
<dbReference type="SUPFAM" id="SSF53335">
    <property type="entry name" value="S-adenosyl-L-methionine-dependent methyltransferases"/>
    <property type="match status" value="1"/>
</dbReference>
<dbReference type="PROSITE" id="PS51682">
    <property type="entry name" value="SAM_OMT_I"/>
    <property type="match status" value="1"/>
</dbReference>
<name>CAMT3_PETHY</name>
<evidence type="ECO:0000250" key="1">
    <source>
        <dbReference type="UniProtKB" id="A0A0S2UWC9"/>
    </source>
</evidence>
<evidence type="ECO:0000250" key="2">
    <source>
        <dbReference type="UniProtKB" id="Q40313"/>
    </source>
</evidence>
<evidence type="ECO:0000255" key="3">
    <source>
        <dbReference type="PROSITE-ProRule" id="PRU01019"/>
    </source>
</evidence>
<evidence type="ECO:0000269" key="4">
    <source>
    </source>
</evidence>
<evidence type="ECO:0000303" key="5">
    <source>
    </source>
</evidence>
<evidence type="ECO:0000305" key="6"/>
<keyword id="KW-0963">Cytoplasm</keyword>
<keyword id="KW-0438">Lignin biosynthesis</keyword>
<keyword id="KW-0479">Metal-binding</keyword>
<keyword id="KW-0489">Methyltransferase</keyword>
<keyword id="KW-0949">S-adenosyl-L-methionine</keyword>
<keyword id="KW-0808">Transferase</keyword>
<comment type="function">
    <text evidence="1 4">Involved in the production of floral volatile phenylpropanoids in flowers of fragrant cultivars (e.g. cv. Mitchell and cv. V26) from cinnamic acid, a common precursor with the anthocyanin biosynthesis pathway involved in flower pigmentation (By similarity). Methylates caffeoyl-CoA to feruloyl-CoA, also able to methylate 5-hydroxyferuloyl-CoA (PubMed:26620524).</text>
</comment>
<comment type="catalytic activity">
    <reaction evidence="3 4">
        <text>(E)-caffeoyl-CoA + S-adenosyl-L-methionine = (E)-feruloyl-CoA + S-adenosyl-L-homocysteine + H(+)</text>
        <dbReference type="Rhea" id="RHEA:16925"/>
        <dbReference type="ChEBI" id="CHEBI:15378"/>
        <dbReference type="ChEBI" id="CHEBI:57856"/>
        <dbReference type="ChEBI" id="CHEBI:59789"/>
        <dbReference type="ChEBI" id="CHEBI:87136"/>
        <dbReference type="ChEBI" id="CHEBI:87305"/>
        <dbReference type="EC" id="2.1.1.104"/>
    </reaction>
    <physiologicalReaction direction="left-to-right" evidence="4">
        <dbReference type="Rhea" id="RHEA:16926"/>
    </physiologicalReaction>
</comment>
<comment type="catalytic activity">
    <reaction evidence="4">
        <text>(E)-5-hydroxyferuloyl-CoA + S-adenosyl-L-methionine = (E)-sinapoyl-CoA + S-adenosyl-L-homocysteine + H(+)</text>
        <dbReference type="Rhea" id="RHEA:64860"/>
        <dbReference type="ChEBI" id="CHEBI:15378"/>
        <dbReference type="ChEBI" id="CHEBI:57393"/>
        <dbReference type="ChEBI" id="CHEBI:57856"/>
        <dbReference type="ChEBI" id="CHEBI:59789"/>
        <dbReference type="ChEBI" id="CHEBI:156249"/>
    </reaction>
    <physiologicalReaction direction="left-to-right" evidence="4">
        <dbReference type="Rhea" id="RHEA:64861"/>
    </physiologicalReaction>
</comment>
<comment type="cofactor">
    <cofactor evidence="2">
        <name>a divalent metal cation</name>
        <dbReference type="ChEBI" id="CHEBI:60240"/>
    </cofactor>
    <text evidence="2">Binds 1 divalent metal cation per subunit.</text>
</comment>
<comment type="biophysicochemical properties">
    <kinetics>
        <Vmax evidence="4">15.0 pmol/sec/mg enzyme with (E)-caffeoyl-CoA as substrate</Vmax>
    </kinetics>
</comment>
<comment type="pathway">
    <text evidence="1">Aromatic compound metabolism; phenylpropanoid biosynthesis.</text>
</comment>
<comment type="subcellular location">
    <subcellularLocation>
        <location evidence="1">Cytoplasm</location>
        <location evidence="1">Cytosol</location>
    </subcellularLocation>
</comment>
<comment type="tissue specificity">
    <text evidence="4">Mostly expressed in petal limbs and tubes, and, at low levels, in stems, roots and leaves.</text>
</comment>
<comment type="developmental stage">
    <text evidence="4">Accumulates during flower development with highest levels in open flowers, at anthesis, and fades out as flowers are senescing.</text>
</comment>
<comment type="induction">
    <text evidence="4">Circadian-regulation with peak levels occurring at the end of the light period in flowers.</text>
</comment>
<comment type="similarity">
    <text evidence="3">Belongs to the class I-like SAM-binding methyltransferase superfamily. Cation-dependent O-methyltransferase family. CCoAMT subfamily.</text>
</comment>
<reference key="1">
    <citation type="journal article" date="2016" name="Plant Physiol.">
        <title>CCoAOMT down-regulation activates anthocyanin biosynthesis in petunia.</title>
        <authorList>
            <person name="Shaipulah N.F.M."/>
            <person name="Muhlemann J.K."/>
            <person name="Woodworth B.D."/>
            <person name="Van Moerkercke A."/>
            <person name="Verdonk J.C."/>
            <person name="Ramirez A.A."/>
            <person name="Haring M.A."/>
            <person name="Dudareva N."/>
            <person name="Schuurink R.C."/>
        </authorList>
    </citation>
    <scope>NUCLEOTIDE SEQUENCE [MRNA]</scope>
    <scope>FUNCTION</scope>
    <scope>CATALYTIC ACTIVITY</scope>
    <scope>BIOPHYSICOCHEMICAL PROPERTIES</scope>
    <scope>TISSUE SPECIFICITY</scope>
    <scope>DEVELOPMENTAL STAGE</scope>
    <scope>INDUCTION</scope>
    <source>
        <strain>cv. Mitchell</strain>
        <tissue>Corolla</tissue>
    </source>
</reference>
<accession>A0A0S2UWA5</accession>